<feature type="chain" id="PRO_0000299762" description="Uncharacterized protein YJL077W-A">
    <location>
        <begin position="1"/>
        <end position="28"/>
    </location>
</feature>
<keyword id="KW-1185">Reference proteome</keyword>
<gene>
    <name type="ordered locus">YJL077W-A</name>
</gene>
<organism>
    <name type="scientific">Saccharomyces cerevisiae (strain ATCC 204508 / S288c)</name>
    <name type="common">Baker's yeast</name>
    <dbReference type="NCBI Taxonomy" id="559292"/>
    <lineage>
        <taxon>Eukaryota</taxon>
        <taxon>Fungi</taxon>
        <taxon>Dikarya</taxon>
        <taxon>Ascomycota</taxon>
        <taxon>Saccharomycotina</taxon>
        <taxon>Saccharomycetes</taxon>
        <taxon>Saccharomycetales</taxon>
        <taxon>Saccharomycetaceae</taxon>
        <taxon>Saccharomyces</taxon>
    </lineage>
</organism>
<accession>Q8TGN3</accession>
<accession>I2HB66</accession>
<dbReference type="EMBL" id="Z49352">
    <property type="status" value="NOT_ANNOTATED_CDS"/>
    <property type="molecule type" value="Genomic_DNA"/>
</dbReference>
<dbReference type="EMBL" id="AF479957">
    <property type="protein sequence ID" value="AAL79270.1"/>
    <property type="molecule type" value="Genomic_DNA"/>
</dbReference>
<dbReference type="EMBL" id="BK006943">
    <property type="protein sequence ID" value="DAA35120.1"/>
    <property type="molecule type" value="Genomic_DNA"/>
</dbReference>
<dbReference type="RefSeq" id="NP_001257682.1">
    <property type="nucleotide sequence ID" value="NM_001270753.1"/>
</dbReference>
<dbReference type="BioGRID" id="4312347">
    <property type="interactions" value="1"/>
</dbReference>
<dbReference type="FunCoup" id="Q8TGN3">
    <property type="interactions" value="22"/>
</dbReference>
<dbReference type="STRING" id="4932.YJL077W-A"/>
<dbReference type="PaxDb" id="4932-YJL077W-A"/>
<dbReference type="EnsemblFungi" id="YJL077W-A_mRNA">
    <property type="protein sequence ID" value="YJL077W-A"/>
    <property type="gene ID" value="YJL077W-A"/>
</dbReference>
<dbReference type="GeneID" id="13393612"/>
<dbReference type="KEGG" id="sce:YJL077W-A"/>
<dbReference type="AGR" id="SGD:S000028661"/>
<dbReference type="SGD" id="S000028661">
    <property type="gene designation" value="YJL077W-A"/>
</dbReference>
<dbReference type="VEuPathDB" id="FungiDB:YJL077W-A"/>
<dbReference type="HOGENOM" id="CLU_3413165_0_0_1"/>
<dbReference type="InParanoid" id="Q8TGN3"/>
<dbReference type="BioCyc" id="YEAST:G3O-31807-MONOMER"/>
<dbReference type="BioGRID-ORCS" id="13393612">
    <property type="hits" value="0 hits in 10 CRISPR screens"/>
</dbReference>
<dbReference type="PRO" id="PR:Q8TGN3"/>
<dbReference type="Proteomes" id="UP000002311">
    <property type="component" value="Chromosome X"/>
</dbReference>
<reference key="1">
    <citation type="journal article" date="1996" name="EMBO J.">
        <title>Complete nucleotide sequence of Saccharomyces cerevisiae chromosome X.</title>
        <authorList>
            <person name="Galibert F."/>
            <person name="Alexandraki D."/>
            <person name="Baur A."/>
            <person name="Boles E."/>
            <person name="Chalwatzis N."/>
            <person name="Chuat J.-C."/>
            <person name="Coster F."/>
            <person name="Cziepluch C."/>
            <person name="de Haan M."/>
            <person name="Domdey H."/>
            <person name="Durand P."/>
            <person name="Entian K.-D."/>
            <person name="Gatius M."/>
            <person name="Goffeau A."/>
            <person name="Grivell L.A."/>
            <person name="Hennemann A."/>
            <person name="Herbert C.J."/>
            <person name="Heumann K."/>
            <person name="Hilger F."/>
            <person name="Hollenberg C.P."/>
            <person name="Huang M.-E."/>
            <person name="Jacq C."/>
            <person name="Jauniaux J.-C."/>
            <person name="Katsoulou C."/>
            <person name="Kirchrath L."/>
            <person name="Kleine K."/>
            <person name="Kordes E."/>
            <person name="Koetter P."/>
            <person name="Liebl S."/>
            <person name="Louis E.J."/>
            <person name="Manus V."/>
            <person name="Mewes H.-W."/>
            <person name="Miosga T."/>
            <person name="Obermaier B."/>
            <person name="Perea J."/>
            <person name="Pohl T.M."/>
            <person name="Portetelle D."/>
            <person name="Pujol A."/>
            <person name="Purnelle B."/>
            <person name="Ramezani Rad M."/>
            <person name="Rasmussen S.W."/>
            <person name="Rose M."/>
            <person name="Rossau R."/>
            <person name="Schaaff-Gerstenschlaeger I."/>
            <person name="Smits P.H.M."/>
            <person name="Scarcez T."/>
            <person name="Soriano N."/>
            <person name="To Van D."/>
            <person name="Tzermia M."/>
            <person name="Van Broekhoven A."/>
            <person name="Vandenbol M."/>
            <person name="Wedler H."/>
            <person name="von Wettstein D."/>
            <person name="Wambutt R."/>
            <person name="Zagulski M."/>
            <person name="Zollner A."/>
            <person name="Karpfinger-Hartl L."/>
        </authorList>
    </citation>
    <scope>NUCLEOTIDE SEQUENCE [LARGE SCALE GENOMIC DNA]</scope>
    <source>
        <strain>ATCC 204508 / S288c</strain>
    </source>
</reference>
<reference key="2">
    <citation type="journal article" date="2014" name="G3 (Bethesda)">
        <title>The reference genome sequence of Saccharomyces cerevisiae: Then and now.</title>
        <authorList>
            <person name="Engel S.R."/>
            <person name="Dietrich F.S."/>
            <person name="Fisk D.G."/>
            <person name="Binkley G."/>
            <person name="Balakrishnan R."/>
            <person name="Costanzo M.C."/>
            <person name="Dwight S.S."/>
            <person name="Hitz B.C."/>
            <person name="Karra K."/>
            <person name="Nash R.S."/>
            <person name="Weng S."/>
            <person name="Wong E.D."/>
            <person name="Lloyd P."/>
            <person name="Skrzypek M.S."/>
            <person name="Miyasato S.R."/>
            <person name="Simison M."/>
            <person name="Cherry J.M."/>
        </authorList>
    </citation>
    <scope>GENOME REANNOTATION</scope>
    <source>
        <strain>ATCC 204508 / S288c</strain>
    </source>
</reference>
<reference key="3">
    <citation type="journal article" date="2002" name="Nat. Biotechnol.">
        <title>An integrated approach for finding overlooked genes in yeast.</title>
        <authorList>
            <person name="Kumar A."/>
            <person name="Harrison P.M."/>
            <person name="Cheung K.-H."/>
            <person name="Lan N."/>
            <person name="Echols N."/>
            <person name="Bertone P."/>
            <person name="Miller P."/>
            <person name="Gerstein M.B."/>
            <person name="Snyder M."/>
        </authorList>
    </citation>
    <scope>NUCLEOTIDE SEQUENCE [GENOMIC DNA]</scope>
</reference>
<reference key="4">
    <citation type="journal article" date="2012" name="Science">
        <title>High-resolution view of the yeast meiotic program revealed by ribosome profiling.</title>
        <authorList>
            <person name="Brar G.A."/>
            <person name="Yassour M."/>
            <person name="Friedman N."/>
            <person name="Regev A."/>
            <person name="Ingolia N.T."/>
            <person name="Weissman J.S."/>
        </authorList>
    </citation>
    <scope>IDENTIFICATION</scope>
</reference>
<proteinExistence type="predicted"/>
<protein>
    <recommendedName>
        <fullName>Uncharacterized protein YJL077W-A</fullName>
    </recommendedName>
</protein>
<name>YJ77A_YEAST</name>
<sequence length="28" mass="3078">MPGIAFKGKDMVKAIQFLEIVVPCHCTT</sequence>